<comment type="function">
    <text>Tubulin is the major constituent of microtubules, a cylinder consisting of laterally associated linear protofilaments composed of alpha- and beta-tubulin heterodimers. Microtubules grow by the addition of GTP-tubulin dimers to the microtubule end, where a stabilizing cap forms. Below the cap, tubulin dimers are in GDP-bound state, owing to GTPase activity of alpha-tubulin.</text>
</comment>
<comment type="catalytic activity">
    <reaction evidence="3">
        <text>GTP + H2O = GDP + phosphate + H(+)</text>
        <dbReference type="Rhea" id="RHEA:19669"/>
        <dbReference type="ChEBI" id="CHEBI:15377"/>
        <dbReference type="ChEBI" id="CHEBI:15378"/>
        <dbReference type="ChEBI" id="CHEBI:37565"/>
        <dbReference type="ChEBI" id="CHEBI:43474"/>
        <dbReference type="ChEBI" id="CHEBI:58189"/>
    </reaction>
    <physiologicalReaction direction="left-to-right" evidence="3">
        <dbReference type="Rhea" id="RHEA:19670"/>
    </physiologicalReaction>
</comment>
<comment type="cofactor">
    <cofactor evidence="3">
        <name>Mg(2+)</name>
        <dbReference type="ChEBI" id="CHEBI:18420"/>
    </cofactor>
</comment>
<comment type="subunit">
    <text>Dimer of alpha and beta chains. A typical microtubule is a hollow water-filled tube with an outer diameter of 25 nm and an inner diameter of 15 nM. Alpha-beta heterodimers associate head-to-tail to form protofilaments running lengthwise along the microtubule wall with the beta-tubulin subunit facing the microtubule plus end conferring a structural polarity. Microtubules usually have 13 protofilaments but different protofilament numbers can be found in some organisms and specialized cells.</text>
</comment>
<comment type="subcellular location">
    <subcellularLocation>
        <location evidence="1">Cytoplasm</location>
        <location evidence="1">Cytoskeleton</location>
    </subcellularLocation>
</comment>
<comment type="alternative products">
    <event type="alternative splicing"/>
    <isoform>
        <id>A6NHL2-1</id>
        <name>1</name>
        <sequence type="displayed"/>
    </isoform>
    <isoform>
        <id>A6NHL2-2</id>
        <name>2</name>
        <sequence type="described" ref="VSP_030108"/>
    </isoform>
</comment>
<comment type="domain">
    <text evidence="3">The MREC motif may be critical for tubulin autoregulation.</text>
</comment>
<comment type="PTM">
    <text evidence="4 5">Some glutamate residues at the C-terminus are polyglutamylated, resulting in polyglutamate chains on the gamma-carboxyl group. Polyglutamylation plays a key role in microtubule severing by spastin (SPAST). SPAST preferentially recognizes and acts on microtubules decorated with short polyglutamate tails: severing activity by SPAST increases as the number of glutamates per tubulin rises from one to eight, but decreases beyond this glutamylation threshold. Glutamylation is also involved in cilia motility (By similarity).</text>
</comment>
<comment type="PTM">
    <text evidence="2">Some glutamate residues at the C-terminus are monoglycylated but not polyglycylated due to the absence of functional TTLL10 in human. Monoglycylation is mainly limited to tubulin incorporated into cilia and flagella axonemes, which is required for their stability and maintenance. Flagella glycylation controls sperm motility. Both polyglutamylation and monoglycylation can coexist on the same protein on adjacent residues, and lowering glycylation levels increases polyglutamylation, and reciprocally.</text>
</comment>
<comment type="similarity">
    <text evidence="8">Belongs to the tubulin family.</text>
</comment>
<dbReference type="EC" id="3.6.5.-" evidence="3"/>
<dbReference type="EMBL" id="AK025318">
    <property type="protein sequence ID" value="BAB15110.1"/>
    <property type="molecule type" value="mRNA"/>
</dbReference>
<dbReference type="EMBL" id="AK296616">
    <property type="protein sequence ID" value="BAG59224.1"/>
    <property type="molecule type" value="mRNA"/>
</dbReference>
<dbReference type="EMBL" id="AL683826">
    <property type="status" value="NOT_ANNOTATED_CDS"/>
    <property type="molecule type" value="Genomic_DNA"/>
</dbReference>
<dbReference type="EMBL" id="CH471072">
    <property type="protein sequence ID" value="EAW86447.1"/>
    <property type="molecule type" value="Genomic_DNA"/>
</dbReference>
<dbReference type="EMBL" id="BC098247">
    <property type="protein sequence ID" value="AAH98247.1"/>
    <property type="molecule type" value="mRNA"/>
</dbReference>
<dbReference type="EMBL" id="BC099716">
    <property type="protein sequence ID" value="AAH99716.1"/>
    <property type="molecule type" value="mRNA"/>
</dbReference>
<dbReference type="EMBL" id="BC105634">
    <property type="protein sequence ID" value="AAI05635.1"/>
    <property type="molecule type" value="mRNA"/>
</dbReference>
<dbReference type="CCDS" id="CCDS53491.1">
    <molecule id="A6NHL2-2"/>
</dbReference>
<dbReference type="CCDS" id="CCDS7066.2">
    <molecule id="A6NHL2-1"/>
</dbReference>
<dbReference type="RefSeq" id="NP_001165335.1">
    <molecule id="A6NHL2-2"/>
    <property type="nucleotide sequence ID" value="NM_001171864.2"/>
</dbReference>
<dbReference type="RefSeq" id="NP_079079.1">
    <molecule id="A6NHL2-1"/>
    <property type="nucleotide sequence ID" value="NM_024803.3"/>
</dbReference>
<dbReference type="SMR" id="A6NHL2"/>
<dbReference type="BioGRID" id="122949">
    <property type="interactions" value="65"/>
</dbReference>
<dbReference type="FunCoup" id="A6NHL2">
    <property type="interactions" value="681"/>
</dbReference>
<dbReference type="IntAct" id="A6NHL2">
    <property type="interactions" value="32"/>
</dbReference>
<dbReference type="MINT" id="A6NHL2"/>
<dbReference type="STRING" id="9606.ENSP00000369784"/>
<dbReference type="BindingDB" id="A6NHL2"/>
<dbReference type="ChEMBL" id="CHEMBL3832941"/>
<dbReference type="GlyGen" id="A6NHL2">
    <property type="glycosylation" value="1 site, 1 O-linked glycan (1 site)"/>
</dbReference>
<dbReference type="iPTMnet" id="A6NHL2"/>
<dbReference type="MetOSite" id="A6NHL2"/>
<dbReference type="PhosphoSitePlus" id="A6NHL2"/>
<dbReference type="SwissPalm" id="A6NHL2"/>
<dbReference type="BioMuta" id="TUBAL3"/>
<dbReference type="jPOST" id="A6NHL2"/>
<dbReference type="MassIVE" id="A6NHL2"/>
<dbReference type="PaxDb" id="9606-ENSP00000369784"/>
<dbReference type="PeptideAtlas" id="A6NHL2"/>
<dbReference type="PRIDE" id="A6NHL2"/>
<dbReference type="ProteomicsDB" id="1205">
    <molecule id="A6NHL2-1"/>
</dbReference>
<dbReference type="ProteomicsDB" id="1206">
    <molecule id="A6NHL2-2"/>
</dbReference>
<dbReference type="Pumba" id="A6NHL2"/>
<dbReference type="Antibodypedia" id="24080">
    <property type="antibodies" value="228 antibodies from 14 providers"/>
</dbReference>
<dbReference type="DNASU" id="79861"/>
<dbReference type="Ensembl" id="ENST00000380419.8">
    <molecule id="A6NHL2-1"/>
    <property type="protein sequence ID" value="ENSP00000369784.3"/>
    <property type="gene ID" value="ENSG00000178462.12"/>
</dbReference>
<dbReference type="Ensembl" id="ENST00000479328.1">
    <molecule id="A6NHL2-2"/>
    <property type="protein sequence ID" value="ENSP00000418799.1"/>
    <property type="gene ID" value="ENSG00000178462.12"/>
</dbReference>
<dbReference type="GeneID" id="79861"/>
<dbReference type="KEGG" id="hsa:79861"/>
<dbReference type="MANE-Select" id="ENST00000380419.8">
    <property type="protein sequence ID" value="ENSP00000369784.3"/>
    <property type="RefSeq nucleotide sequence ID" value="NM_024803.3"/>
    <property type="RefSeq protein sequence ID" value="NP_079079.1"/>
</dbReference>
<dbReference type="UCSC" id="uc001ihy.3">
    <molecule id="A6NHL2-1"/>
    <property type="organism name" value="human"/>
</dbReference>
<dbReference type="AGR" id="HGNC:23534"/>
<dbReference type="CTD" id="79861"/>
<dbReference type="GeneCards" id="TUBAL3"/>
<dbReference type="HGNC" id="HGNC:23534">
    <property type="gene designation" value="TUBAL3"/>
</dbReference>
<dbReference type="HPA" id="ENSG00000178462">
    <property type="expression patterns" value="Tissue enriched (intestine)"/>
</dbReference>
<dbReference type="MIM" id="620835">
    <property type="type" value="gene"/>
</dbReference>
<dbReference type="neXtProt" id="NX_A6NHL2"/>
<dbReference type="OpenTargets" id="ENSG00000178462"/>
<dbReference type="PharmGKB" id="PA134953102"/>
<dbReference type="VEuPathDB" id="HostDB:ENSG00000178462"/>
<dbReference type="eggNOG" id="KOG1376">
    <property type="taxonomic scope" value="Eukaryota"/>
</dbReference>
<dbReference type="GeneTree" id="ENSGT00940000162594"/>
<dbReference type="HOGENOM" id="CLU_015718_0_0_1"/>
<dbReference type="InParanoid" id="A6NHL2"/>
<dbReference type="OMA" id="VYDICHH"/>
<dbReference type="OrthoDB" id="6073114at2759"/>
<dbReference type="PAN-GO" id="A6NHL2">
    <property type="GO annotations" value="6 GO annotations based on evolutionary models"/>
</dbReference>
<dbReference type="PhylomeDB" id="A6NHL2"/>
<dbReference type="TreeFam" id="TF300314"/>
<dbReference type="PathwayCommons" id="A6NHL2"/>
<dbReference type="Reactome" id="R-HSA-1445148">
    <property type="pathway name" value="Translocation of SLC2A4 (GLUT4) to the plasma membrane"/>
</dbReference>
<dbReference type="Reactome" id="R-HSA-190840">
    <property type="pathway name" value="Microtubule-dependent trafficking of connexons from Golgi to the plasma membrane"/>
</dbReference>
<dbReference type="Reactome" id="R-HSA-190861">
    <property type="pathway name" value="Gap junction assembly"/>
</dbReference>
<dbReference type="Reactome" id="R-HSA-2132295">
    <property type="pathway name" value="MHC class II antigen presentation"/>
</dbReference>
<dbReference type="Reactome" id="R-HSA-2467813">
    <property type="pathway name" value="Separation of Sister Chromatids"/>
</dbReference>
<dbReference type="Reactome" id="R-HSA-2500257">
    <property type="pathway name" value="Resolution of Sister Chromatid Cohesion"/>
</dbReference>
<dbReference type="Reactome" id="R-HSA-3371497">
    <property type="pathway name" value="HSP90 chaperone cycle for steroid hormone receptors (SHR) in the presence of ligand"/>
</dbReference>
<dbReference type="Reactome" id="R-HSA-380320">
    <property type="pathway name" value="Recruitment of NuMA to mitotic centrosomes"/>
</dbReference>
<dbReference type="Reactome" id="R-HSA-389960">
    <property type="pathway name" value="Formation of tubulin folding intermediates by CCT/TriC"/>
</dbReference>
<dbReference type="Reactome" id="R-HSA-389977">
    <property type="pathway name" value="Post-chaperonin tubulin folding pathway"/>
</dbReference>
<dbReference type="Reactome" id="R-HSA-437239">
    <property type="pathway name" value="Recycling pathway of L1"/>
</dbReference>
<dbReference type="Reactome" id="R-HSA-5617833">
    <property type="pathway name" value="Cilium Assembly"/>
</dbReference>
<dbReference type="Reactome" id="R-HSA-5626467">
    <property type="pathway name" value="RHO GTPases activate IQGAPs"/>
</dbReference>
<dbReference type="Reactome" id="R-HSA-5663220">
    <property type="pathway name" value="RHO GTPases Activate Formins"/>
</dbReference>
<dbReference type="Reactome" id="R-HSA-6807878">
    <property type="pathway name" value="COPI-mediated anterograde transport"/>
</dbReference>
<dbReference type="Reactome" id="R-HSA-6811434">
    <property type="pathway name" value="COPI-dependent Golgi-to-ER retrograde traffic"/>
</dbReference>
<dbReference type="Reactome" id="R-HSA-6811436">
    <property type="pathway name" value="COPI-independent Golgi-to-ER retrograde traffic"/>
</dbReference>
<dbReference type="Reactome" id="R-HSA-68877">
    <property type="pathway name" value="Mitotic Prometaphase"/>
</dbReference>
<dbReference type="Reactome" id="R-HSA-8852276">
    <property type="pathway name" value="The role of GTSE1 in G2/M progression after G2 checkpoint"/>
</dbReference>
<dbReference type="Reactome" id="R-HSA-8955332">
    <property type="pathway name" value="Carboxyterminal post-translational modifications of tubulin"/>
</dbReference>
<dbReference type="Reactome" id="R-HSA-9609690">
    <property type="pathway name" value="HCMV Early Events"/>
</dbReference>
<dbReference type="Reactome" id="R-HSA-9609736">
    <property type="pathway name" value="Assembly and cell surface presentation of NMDA receptors"/>
</dbReference>
<dbReference type="Reactome" id="R-HSA-9619483">
    <property type="pathway name" value="Activation of AMPK downstream of NMDARs"/>
</dbReference>
<dbReference type="Reactome" id="R-HSA-9646399">
    <property type="pathway name" value="Aggrephagy"/>
</dbReference>
<dbReference type="Reactome" id="R-HSA-9648025">
    <property type="pathway name" value="EML4 and NUDC in mitotic spindle formation"/>
</dbReference>
<dbReference type="Reactome" id="R-HSA-9668328">
    <property type="pathway name" value="Sealing of the nuclear envelope (NE) by ESCRT-III"/>
</dbReference>
<dbReference type="Reactome" id="R-HSA-983189">
    <property type="pathway name" value="Kinesins"/>
</dbReference>
<dbReference type="Reactome" id="R-HSA-9833482">
    <property type="pathway name" value="PKR-mediated signaling"/>
</dbReference>
<dbReference type="SignaLink" id="A6NHL2"/>
<dbReference type="BioGRID-ORCS" id="79861">
    <property type="hits" value="11 hits in 1157 CRISPR screens"/>
</dbReference>
<dbReference type="GenomeRNAi" id="79861"/>
<dbReference type="Pharos" id="A6NHL2">
    <property type="development level" value="Tdark"/>
</dbReference>
<dbReference type="PRO" id="PR:A6NHL2"/>
<dbReference type="Proteomes" id="UP000005640">
    <property type="component" value="Chromosome 10"/>
</dbReference>
<dbReference type="RNAct" id="A6NHL2">
    <property type="molecule type" value="protein"/>
</dbReference>
<dbReference type="Bgee" id="ENSG00000178462">
    <property type="expression patterns" value="Expressed in jejunal mucosa and 83 other cell types or tissues"/>
</dbReference>
<dbReference type="GO" id="GO:0005737">
    <property type="term" value="C:cytoplasm"/>
    <property type="evidence" value="ECO:0000318"/>
    <property type="project" value="GO_Central"/>
</dbReference>
<dbReference type="GO" id="GO:0005874">
    <property type="term" value="C:microtubule"/>
    <property type="evidence" value="ECO:0000318"/>
    <property type="project" value="GO_Central"/>
</dbReference>
<dbReference type="GO" id="GO:0005525">
    <property type="term" value="F:GTP binding"/>
    <property type="evidence" value="ECO:0000318"/>
    <property type="project" value="GO_Central"/>
</dbReference>
<dbReference type="GO" id="GO:0016787">
    <property type="term" value="F:hydrolase activity"/>
    <property type="evidence" value="ECO:0007669"/>
    <property type="project" value="UniProtKB-KW"/>
</dbReference>
<dbReference type="GO" id="GO:0046872">
    <property type="term" value="F:metal ion binding"/>
    <property type="evidence" value="ECO:0007669"/>
    <property type="project" value="UniProtKB-KW"/>
</dbReference>
<dbReference type="GO" id="GO:0005200">
    <property type="term" value="F:structural constituent of cytoskeleton"/>
    <property type="evidence" value="ECO:0000318"/>
    <property type="project" value="GO_Central"/>
</dbReference>
<dbReference type="GO" id="GO:0000226">
    <property type="term" value="P:microtubule cytoskeleton organization"/>
    <property type="evidence" value="ECO:0000318"/>
    <property type="project" value="GO_Central"/>
</dbReference>
<dbReference type="GO" id="GO:0000278">
    <property type="term" value="P:mitotic cell cycle"/>
    <property type="evidence" value="ECO:0000318"/>
    <property type="project" value="GO_Central"/>
</dbReference>
<dbReference type="CDD" id="cd02186">
    <property type="entry name" value="alpha_tubulin"/>
    <property type="match status" value="1"/>
</dbReference>
<dbReference type="FunFam" id="1.10.287.600:FF:000001">
    <property type="entry name" value="Tubulin alpha chain"/>
    <property type="match status" value="1"/>
</dbReference>
<dbReference type="FunFam" id="3.30.1330.20:FF:000001">
    <property type="entry name" value="Tubulin alpha chain"/>
    <property type="match status" value="1"/>
</dbReference>
<dbReference type="FunFam" id="3.40.50.1440:FF:000007">
    <property type="entry name" value="Tubulin alpha chain"/>
    <property type="match status" value="1"/>
</dbReference>
<dbReference type="Gene3D" id="1.10.287.600">
    <property type="entry name" value="Helix hairpin bin"/>
    <property type="match status" value="1"/>
</dbReference>
<dbReference type="Gene3D" id="3.30.1330.20">
    <property type="entry name" value="Tubulin/FtsZ, C-terminal domain"/>
    <property type="match status" value="1"/>
</dbReference>
<dbReference type="Gene3D" id="3.40.50.1440">
    <property type="entry name" value="Tubulin/FtsZ, GTPase domain"/>
    <property type="match status" value="1"/>
</dbReference>
<dbReference type="InterPro" id="IPR002452">
    <property type="entry name" value="Alpha_tubulin"/>
</dbReference>
<dbReference type="InterPro" id="IPR008280">
    <property type="entry name" value="Tub_FtsZ_C"/>
</dbReference>
<dbReference type="InterPro" id="IPR000217">
    <property type="entry name" value="Tubulin"/>
</dbReference>
<dbReference type="InterPro" id="IPR037103">
    <property type="entry name" value="Tubulin/FtsZ-like_C"/>
</dbReference>
<dbReference type="InterPro" id="IPR018316">
    <property type="entry name" value="Tubulin/FtsZ_2-layer-sand-dom"/>
</dbReference>
<dbReference type="InterPro" id="IPR036525">
    <property type="entry name" value="Tubulin/FtsZ_GTPase_sf"/>
</dbReference>
<dbReference type="InterPro" id="IPR023123">
    <property type="entry name" value="Tubulin_C"/>
</dbReference>
<dbReference type="InterPro" id="IPR017975">
    <property type="entry name" value="Tubulin_CS"/>
</dbReference>
<dbReference type="InterPro" id="IPR003008">
    <property type="entry name" value="Tubulin_FtsZ_GTPase"/>
</dbReference>
<dbReference type="PANTHER" id="PTHR11588">
    <property type="entry name" value="TUBULIN"/>
    <property type="match status" value="1"/>
</dbReference>
<dbReference type="Pfam" id="PF00091">
    <property type="entry name" value="Tubulin"/>
    <property type="match status" value="1"/>
</dbReference>
<dbReference type="Pfam" id="PF03953">
    <property type="entry name" value="Tubulin_C"/>
    <property type="match status" value="1"/>
</dbReference>
<dbReference type="PRINTS" id="PR01162">
    <property type="entry name" value="ALPHATUBULIN"/>
</dbReference>
<dbReference type="PRINTS" id="PR01161">
    <property type="entry name" value="TUBULIN"/>
</dbReference>
<dbReference type="SMART" id="SM00864">
    <property type="entry name" value="Tubulin"/>
    <property type="match status" value="1"/>
</dbReference>
<dbReference type="SMART" id="SM00865">
    <property type="entry name" value="Tubulin_C"/>
    <property type="match status" value="1"/>
</dbReference>
<dbReference type="SUPFAM" id="SSF55307">
    <property type="entry name" value="Tubulin C-terminal domain-like"/>
    <property type="match status" value="1"/>
</dbReference>
<dbReference type="SUPFAM" id="SSF52490">
    <property type="entry name" value="Tubulin nucleotide-binding domain-like"/>
    <property type="match status" value="1"/>
</dbReference>
<dbReference type="PROSITE" id="PS00227">
    <property type="entry name" value="TUBULIN"/>
    <property type="match status" value="1"/>
</dbReference>
<gene>
    <name type="primary">TUBAL3</name>
</gene>
<feature type="chain" id="PRO_0000313709" description="Tubulin alpha chain-like 3">
    <location>
        <begin position="1"/>
        <end position="446"/>
    </location>
</feature>
<feature type="short sequence motif" description="MREC motif" evidence="3">
    <location>
        <begin position="1"/>
        <end position="4"/>
    </location>
</feature>
<feature type="active site" evidence="3">
    <location>
        <position position="261"/>
    </location>
</feature>
<feature type="binding site" evidence="3">
    <location>
        <position position="11"/>
    </location>
    <ligand>
        <name>GTP</name>
        <dbReference type="ChEBI" id="CHEBI:37565"/>
    </ligand>
</feature>
<feature type="binding site" evidence="3">
    <location>
        <position position="78"/>
    </location>
    <ligand>
        <name>GTP</name>
        <dbReference type="ChEBI" id="CHEBI:37565"/>
    </ligand>
</feature>
<feature type="binding site" evidence="3">
    <location>
        <position position="78"/>
    </location>
    <ligand>
        <name>Mg(2+)</name>
        <dbReference type="ChEBI" id="CHEBI:18420"/>
    </ligand>
</feature>
<feature type="binding site" evidence="3">
    <location>
        <position position="147"/>
    </location>
    <ligand>
        <name>GTP</name>
        <dbReference type="ChEBI" id="CHEBI:37565"/>
    </ligand>
</feature>
<feature type="binding site" evidence="3">
    <location>
        <position position="151"/>
    </location>
    <ligand>
        <name>GTP</name>
        <dbReference type="ChEBI" id="CHEBI:37565"/>
    </ligand>
</feature>
<feature type="binding site" evidence="3">
    <location>
        <position position="152"/>
    </location>
    <ligand>
        <name>GTP</name>
        <dbReference type="ChEBI" id="CHEBI:37565"/>
    </ligand>
</feature>
<feature type="binding site" evidence="3">
    <location>
        <position position="186"/>
    </location>
    <ligand>
        <name>GTP</name>
        <dbReference type="ChEBI" id="CHEBI:37565"/>
    </ligand>
</feature>
<feature type="binding site" evidence="3">
    <location>
        <position position="213"/>
    </location>
    <ligand>
        <name>GTP</name>
        <dbReference type="ChEBI" id="CHEBI:37565"/>
    </ligand>
</feature>
<feature type="binding site" evidence="3">
    <location>
        <position position="235"/>
    </location>
    <ligand>
        <name>GTP</name>
        <dbReference type="ChEBI" id="CHEBI:37565"/>
    </ligand>
</feature>
<feature type="splice variant" id="VSP_030108" description="In isoform 2." evidence="6 7">
    <original>MRECLSIHIGQAGIQIGDACWELYCLEHGIQPNGVVLDTQQ</original>
    <variation>M</variation>
    <location>
        <begin position="1"/>
        <end position="41"/>
    </location>
</feature>
<feature type="sequence variant" id="VAR_037706" description="In dbSNP:rs11818372.">
    <original>Q</original>
    <variation>H</variation>
    <location>
        <position position="135"/>
    </location>
</feature>
<feature type="sequence variant" id="VAR_037707" description="In dbSNP:rs34080891.">
    <original>R</original>
    <variation>W</variation>
    <location>
        <position position="250"/>
    </location>
</feature>
<feature type="sequence conflict" description="In Ref. 1; BAG59224." evidence="8" ref="1">
    <original>R</original>
    <variation>G</variation>
    <location>
        <position position="128"/>
    </location>
</feature>
<feature type="sequence conflict" description="In Ref. 3; EAW86447." evidence="8" ref="3">
    <original>E</original>
    <variation>K</variation>
    <location>
        <position position="134"/>
    </location>
</feature>
<proteinExistence type="evidence at protein level"/>
<evidence type="ECO:0000250" key="1"/>
<evidence type="ECO:0000250" key="2">
    <source>
        <dbReference type="UniProtKB" id="P07437"/>
    </source>
</evidence>
<evidence type="ECO:0000250" key="3">
    <source>
        <dbReference type="UniProtKB" id="P68363"/>
    </source>
</evidence>
<evidence type="ECO:0000250" key="4">
    <source>
        <dbReference type="UniProtKB" id="P99024"/>
    </source>
</evidence>
<evidence type="ECO:0000250" key="5">
    <source>
        <dbReference type="UniProtKB" id="Q71U36"/>
    </source>
</evidence>
<evidence type="ECO:0000303" key="6">
    <source>
    </source>
</evidence>
<evidence type="ECO:0000303" key="7">
    <source>
    </source>
</evidence>
<evidence type="ECO:0000305" key="8"/>
<sequence>MRECLSIHIGQAGIQIGDACWELYCLEHGIQPNGVVLDTQQDQLENAKMEHTNASFDTFFCETRAGKHVPRALFVDLEPTVIDGIRTGQHRSLFHPEQLLSGKEDAANNYARGRYSVGSEVIDLVLERTRKLAEQCGGLQGFLIFRSFGGGTGSGFTSLLMERLTGEYSRKTKLEFSVYPAPRISTAVVEPYNSVLTTHSTTEHTDCTFMVDNEAVYDICHRKLGVECPSHASINRLVVQVVSSITASLRFEGPLNVDLIEFQTNLVPYPRIHFPMTAFAPIVSADKAYHEQFSVSDITTACFESSNQLVKCDPRLGKYMACCLLYRGDVVPKEVNAAIAATKSRHSVQFVDWCPTGFKVGINNRPPTVMPGGDLAKVHRSICMLSNTTAIVEAWARLDHKFDLMYAKRAFLHWYLREGMEEAEFLEAREDLAALERDYEEVAQSF</sequence>
<keyword id="KW-0025">Alternative splicing</keyword>
<keyword id="KW-0963">Cytoplasm</keyword>
<keyword id="KW-0206">Cytoskeleton</keyword>
<keyword id="KW-0903">Direct protein sequencing</keyword>
<keyword id="KW-0342">GTP-binding</keyword>
<keyword id="KW-0378">Hydrolase</keyword>
<keyword id="KW-0460">Magnesium</keyword>
<keyword id="KW-0479">Metal-binding</keyword>
<keyword id="KW-0493">Microtubule</keyword>
<keyword id="KW-0547">Nucleotide-binding</keyword>
<keyword id="KW-1267">Proteomics identification</keyword>
<keyword id="KW-1185">Reference proteome</keyword>
<organism>
    <name type="scientific">Homo sapiens</name>
    <name type="common">Human</name>
    <dbReference type="NCBI Taxonomy" id="9606"/>
    <lineage>
        <taxon>Eukaryota</taxon>
        <taxon>Metazoa</taxon>
        <taxon>Chordata</taxon>
        <taxon>Craniata</taxon>
        <taxon>Vertebrata</taxon>
        <taxon>Euteleostomi</taxon>
        <taxon>Mammalia</taxon>
        <taxon>Eutheria</taxon>
        <taxon>Euarchontoglires</taxon>
        <taxon>Primates</taxon>
        <taxon>Haplorrhini</taxon>
        <taxon>Catarrhini</taxon>
        <taxon>Hominidae</taxon>
        <taxon>Homo</taxon>
    </lineage>
</organism>
<accession>A6NHL2</accession>
<accession>B4DKL2</accession>
<accession>Q4QQJ5</accession>
<accession>Q9H6Z0</accession>
<reference key="1">
    <citation type="journal article" date="2004" name="Nat. Genet.">
        <title>Complete sequencing and characterization of 21,243 full-length human cDNAs.</title>
        <authorList>
            <person name="Ota T."/>
            <person name="Suzuki Y."/>
            <person name="Nishikawa T."/>
            <person name="Otsuki T."/>
            <person name="Sugiyama T."/>
            <person name="Irie R."/>
            <person name="Wakamatsu A."/>
            <person name="Hayashi K."/>
            <person name="Sato H."/>
            <person name="Nagai K."/>
            <person name="Kimura K."/>
            <person name="Makita H."/>
            <person name="Sekine M."/>
            <person name="Obayashi M."/>
            <person name="Nishi T."/>
            <person name="Shibahara T."/>
            <person name="Tanaka T."/>
            <person name="Ishii S."/>
            <person name="Yamamoto J."/>
            <person name="Saito K."/>
            <person name="Kawai Y."/>
            <person name="Isono Y."/>
            <person name="Nakamura Y."/>
            <person name="Nagahari K."/>
            <person name="Murakami K."/>
            <person name="Yasuda T."/>
            <person name="Iwayanagi T."/>
            <person name="Wagatsuma M."/>
            <person name="Shiratori A."/>
            <person name="Sudo H."/>
            <person name="Hosoiri T."/>
            <person name="Kaku Y."/>
            <person name="Kodaira H."/>
            <person name="Kondo H."/>
            <person name="Sugawara M."/>
            <person name="Takahashi M."/>
            <person name="Kanda K."/>
            <person name="Yokoi T."/>
            <person name="Furuya T."/>
            <person name="Kikkawa E."/>
            <person name="Omura Y."/>
            <person name="Abe K."/>
            <person name="Kamihara K."/>
            <person name="Katsuta N."/>
            <person name="Sato K."/>
            <person name="Tanikawa M."/>
            <person name="Yamazaki M."/>
            <person name="Ninomiya K."/>
            <person name="Ishibashi T."/>
            <person name="Yamashita H."/>
            <person name="Murakawa K."/>
            <person name="Fujimori K."/>
            <person name="Tanai H."/>
            <person name="Kimata M."/>
            <person name="Watanabe M."/>
            <person name="Hiraoka S."/>
            <person name="Chiba Y."/>
            <person name="Ishida S."/>
            <person name="Ono Y."/>
            <person name="Takiguchi S."/>
            <person name="Watanabe S."/>
            <person name="Yosida M."/>
            <person name="Hotuta T."/>
            <person name="Kusano J."/>
            <person name="Kanehori K."/>
            <person name="Takahashi-Fujii A."/>
            <person name="Hara H."/>
            <person name="Tanase T.-O."/>
            <person name="Nomura Y."/>
            <person name="Togiya S."/>
            <person name="Komai F."/>
            <person name="Hara R."/>
            <person name="Takeuchi K."/>
            <person name="Arita M."/>
            <person name="Imose N."/>
            <person name="Musashino K."/>
            <person name="Yuuki H."/>
            <person name="Oshima A."/>
            <person name="Sasaki N."/>
            <person name="Aotsuka S."/>
            <person name="Yoshikawa Y."/>
            <person name="Matsunawa H."/>
            <person name="Ichihara T."/>
            <person name="Shiohata N."/>
            <person name="Sano S."/>
            <person name="Moriya S."/>
            <person name="Momiyama H."/>
            <person name="Satoh N."/>
            <person name="Takami S."/>
            <person name="Terashima Y."/>
            <person name="Suzuki O."/>
            <person name="Nakagawa S."/>
            <person name="Senoh A."/>
            <person name="Mizoguchi H."/>
            <person name="Goto Y."/>
            <person name="Shimizu F."/>
            <person name="Wakebe H."/>
            <person name="Hishigaki H."/>
            <person name="Watanabe T."/>
            <person name="Sugiyama A."/>
            <person name="Takemoto M."/>
            <person name="Kawakami B."/>
            <person name="Yamazaki M."/>
            <person name="Watanabe K."/>
            <person name="Kumagai A."/>
            <person name="Itakura S."/>
            <person name="Fukuzumi Y."/>
            <person name="Fujimori Y."/>
            <person name="Komiyama M."/>
            <person name="Tashiro H."/>
            <person name="Tanigami A."/>
            <person name="Fujiwara T."/>
            <person name="Ono T."/>
            <person name="Yamada K."/>
            <person name="Fujii Y."/>
            <person name="Ozaki K."/>
            <person name="Hirao M."/>
            <person name="Ohmori Y."/>
            <person name="Kawabata A."/>
            <person name="Hikiji T."/>
            <person name="Kobatake N."/>
            <person name="Inagaki H."/>
            <person name="Ikema Y."/>
            <person name="Okamoto S."/>
            <person name="Okitani R."/>
            <person name="Kawakami T."/>
            <person name="Noguchi S."/>
            <person name="Itoh T."/>
            <person name="Shigeta K."/>
            <person name="Senba T."/>
            <person name="Matsumura K."/>
            <person name="Nakajima Y."/>
            <person name="Mizuno T."/>
            <person name="Morinaga M."/>
            <person name="Sasaki M."/>
            <person name="Togashi T."/>
            <person name="Oyama M."/>
            <person name="Hata H."/>
            <person name="Watanabe M."/>
            <person name="Komatsu T."/>
            <person name="Mizushima-Sugano J."/>
            <person name="Satoh T."/>
            <person name="Shirai Y."/>
            <person name="Takahashi Y."/>
            <person name="Nakagawa K."/>
            <person name="Okumura K."/>
            <person name="Nagase T."/>
            <person name="Nomura N."/>
            <person name="Kikuchi H."/>
            <person name="Masuho Y."/>
            <person name="Yamashita R."/>
            <person name="Nakai K."/>
            <person name="Yada T."/>
            <person name="Nakamura Y."/>
            <person name="Ohara O."/>
            <person name="Isogai T."/>
            <person name="Sugano S."/>
        </authorList>
    </citation>
    <scope>NUCLEOTIDE SEQUENCE [LARGE SCALE MRNA] (ISOFORMS 1 AND 2)</scope>
    <source>
        <tissue>Colon</tissue>
    </source>
</reference>
<reference key="2">
    <citation type="journal article" date="2004" name="Nature">
        <title>The DNA sequence and comparative analysis of human chromosome 10.</title>
        <authorList>
            <person name="Deloukas P."/>
            <person name="Earthrowl M.E."/>
            <person name="Grafham D.V."/>
            <person name="Rubenfield M."/>
            <person name="French L."/>
            <person name="Steward C.A."/>
            <person name="Sims S.K."/>
            <person name="Jones M.C."/>
            <person name="Searle S."/>
            <person name="Scott C."/>
            <person name="Howe K."/>
            <person name="Hunt S.E."/>
            <person name="Andrews T.D."/>
            <person name="Gilbert J.G.R."/>
            <person name="Swarbreck D."/>
            <person name="Ashurst J.L."/>
            <person name="Taylor A."/>
            <person name="Battles J."/>
            <person name="Bird C.P."/>
            <person name="Ainscough R."/>
            <person name="Almeida J.P."/>
            <person name="Ashwell R.I.S."/>
            <person name="Ambrose K.D."/>
            <person name="Babbage A.K."/>
            <person name="Bagguley C.L."/>
            <person name="Bailey J."/>
            <person name="Banerjee R."/>
            <person name="Bates K."/>
            <person name="Beasley H."/>
            <person name="Bray-Allen S."/>
            <person name="Brown A.J."/>
            <person name="Brown J.Y."/>
            <person name="Burford D.C."/>
            <person name="Burrill W."/>
            <person name="Burton J."/>
            <person name="Cahill P."/>
            <person name="Camire D."/>
            <person name="Carter N.P."/>
            <person name="Chapman J.C."/>
            <person name="Clark S.Y."/>
            <person name="Clarke G."/>
            <person name="Clee C.M."/>
            <person name="Clegg S."/>
            <person name="Corby N."/>
            <person name="Coulson A."/>
            <person name="Dhami P."/>
            <person name="Dutta I."/>
            <person name="Dunn M."/>
            <person name="Faulkner L."/>
            <person name="Frankish A."/>
            <person name="Frankland J.A."/>
            <person name="Garner P."/>
            <person name="Garnett J."/>
            <person name="Gribble S."/>
            <person name="Griffiths C."/>
            <person name="Grocock R."/>
            <person name="Gustafson E."/>
            <person name="Hammond S."/>
            <person name="Harley J.L."/>
            <person name="Hart E."/>
            <person name="Heath P.D."/>
            <person name="Ho T.P."/>
            <person name="Hopkins B."/>
            <person name="Horne J."/>
            <person name="Howden P.J."/>
            <person name="Huckle E."/>
            <person name="Hynds C."/>
            <person name="Johnson C."/>
            <person name="Johnson D."/>
            <person name="Kana A."/>
            <person name="Kay M."/>
            <person name="Kimberley A.M."/>
            <person name="Kershaw J.K."/>
            <person name="Kokkinaki M."/>
            <person name="Laird G.K."/>
            <person name="Lawlor S."/>
            <person name="Lee H.M."/>
            <person name="Leongamornlert D.A."/>
            <person name="Laird G."/>
            <person name="Lloyd C."/>
            <person name="Lloyd D.M."/>
            <person name="Loveland J."/>
            <person name="Lovell J."/>
            <person name="McLaren S."/>
            <person name="McLay K.E."/>
            <person name="McMurray A."/>
            <person name="Mashreghi-Mohammadi M."/>
            <person name="Matthews L."/>
            <person name="Milne S."/>
            <person name="Nickerson T."/>
            <person name="Nguyen M."/>
            <person name="Overton-Larty E."/>
            <person name="Palmer S.A."/>
            <person name="Pearce A.V."/>
            <person name="Peck A.I."/>
            <person name="Pelan S."/>
            <person name="Phillimore B."/>
            <person name="Porter K."/>
            <person name="Rice C.M."/>
            <person name="Rogosin A."/>
            <person name="Ross M.T."/>
            <person name="Sarafidou T."/>
            <person name="Sehra H.K."/>
            <person name="Shownkeen R."/>
            <person name="Skuce C.D."/>
            <person name="Smith M."/>
            <person name="Standring L."/>
            <person name="Sycamore N."/>
            <person name="Tester J."/>
            <person name="Thorpe A."/>
            <person name="Torcasso W."/>
            <person name="Tracey A."/>
            <person name="Tromans A."/>
            <person name="Tsolas J."/>
            <person name="Wall M."/>
            <person name="Walsh J."/>
            <person name="Wang H."/>
            <person name="Weinstock K."/>
            <person name="West A.P."/>
            <person name="Willey D.L."/>
            <person name="Whitehead S.L."/>
            <person name="Wilming L."/>
            <person name="Wray P.W."/>
            <person name="Young L."/>
            <person name="Chen Y."/>
            <person name="Lovering R.C."/>
            <person name="Moschonas N.K."/>
            <person name="Siebert R."/>
            <person name="Fechtel K."/>
            <person name="Bentley D."/>
            <person name="Durbin R.M."/>
            <person name="Hubbard T."/>
            <person name="Doucette-Stamm L."/>
            <person name="Beck S."/>
            <person name="Smith D.R."/>
            <person name="Rogers J."/>
        </authorList>
    </citation>
    <scope>NUCLEOTIDE SEQUENCE [LARGE SCALE GENOMIC DNA]</scope>
</reference>
<reference key="3">
    <citation type="submission" date="2005-09" db="EMBL/GenBank/DDBJ databases">
        <authorList>
            <person name="Mural R.J."/>
            <person name="Istrail S."/>
            <person name="Sutton G.G."/>
            <person name="Florea L."/>
            <person name="Halpern A.L."/>
            <person name="Mobarry C.M."/>
            <person name="Lippert R."/>
            <person name="Walenz B."/>
            <person name="Shatkay H."/>
            <person name="Dew I."/>
            <person name="Miller J.R."/>
            <person name="Flanigan M.J."/>
            <person name="Edwards N.J."/>
            <person name="Bolanos R."/>
            <person name="Fasulo D."/>
            <person name="Halldorsson B.V."/>
            <person name="Hannenhalli S."/>
            <person name="Turner R."/>
            <person name="Yooseph S."/>
            <person name="Lu F."/>
            <person name="Nusskern D.R."/>
            <person name="Shue B.C."/>
            <person name="Zheng X.H."/>
            <person name="Zhong F."/>
            <person name="Delcher A.L."/>
            <person name="Huson D.H."/>
            <person name="Kravitz S.A."/>
            <person name="Mouchard L."/>
            <person name="Reinert K."/>
            <person name="Remington K.A."/>
            <person name="Clark A.G."/>
            <person name="Waterman M.S."/>
            <person name="Eichler E.E."/>
            <person name="Adams M.D."/>
            <person name="Hunkapiller M.W."/>
            <person name="Myers E.W."/>
            <person name="Venter J.C."/>
        </authorList>
    </citation>
    <scope>NUCLEOTIDE SEQUENCE [LARGE SCALE GENOMIC DNA]</scope>
</reference>
<reference key="4">
    <citation type="journal article" date="2004" name="Genome Res.">
        <title>The status, quality, and expansion of the NIH full-length cDNA project: the Mammalian Gene Collection (MGC).</title>
        <authorList>
            <consortium name="The MGC Project Team"/>
        </authorList>
    </citation>
    <scope>NUCLEOTIDE SEQUENCE [LARGE SCALE MRNA] (ISOFORMS 1 AND 2)</scope>
</reference>
<reference key="5">
    <citation type="submission" date="2009-01" db="UniProtKB">
        <authorList>
            <person name="Lubec G."/>
            <person name="Chen W.-Q."/>
        </authorList>
    </citation>
    <scope>PROTEIN SEQUENCE OF 104-112; 147-163; 319-327 AND 402-408</scope>
    <scope>IDENTIFICATION BY MASS SPECTROMETRY</scope>
    <source>
        <tissue>Fetal brain</tissue>
    </source>
</reference>
<name>TBAL3_HUMAN</name>
<protein>
    <recommendedName>
        <fullName>Tubulin alpha chain-like 3</fullName>
        <ecNumber evidence="3">3.6.5.-</ecNumber>
    </recommendedName>
</protein>